<proteinExistence type="inferred from homology"/>
<evidence type="ECO:0000255" key="1">
    <source>
        <dbReference type="HAMAP-Rule" id="MF_01210"/>
    </source>
</evidence>
<evidence type="ECO:0000305" key="2"/>
<protein>
    <recommendedName>
        <fullName evidence="2">Carbamoyl phosphate synthase arginine-specific large chain</fullName>
        <ecNumber evidence="1">6.3.4.16</ecNumber>
        <ecNumber evidence="1">6.3.5.5</ecNumber>
    </recommendedName>
    <alternativeName>
        <fullName evidence="1">Carbamoyl phosphate synthetase ammonia chain</fullName>
    </alternativeName>
</protein>
<accession>Q9RLS9</accession>
<accession>F9UL01</accession>
<dbReference type="EC" id="6.3.4.16" evidence="1"/>
<dbReference type="EC" id="6.3.5.5" evidence="1"/>
<dbReference type="EMBL" id="X99978">
    <property type="protein sequence ID" value="CAB56843.1"/>
    <property type="molecule type" value="Genomic_DNA"/>
</dbReference>
<dbReference type="EMBL" id="AL935263">
    <property type="protein sequence ID" value="CCC78016.1"/>
    <property type="molecule type" value="Genomic_DNA"/>
</dbReference>
<dbReference type="RefSeq" id="WP_011101042.1">
    <property type="nucleotide sequence ID" value="NC_004567.2"/>
</dbReference>
<dbReference type="RefSeq" id="YP_004888530.1">
    <property type="nucleotide sequence ID" value="NC_004567.2"/>
</dbReference>
<dbReference type="SMR" id="Q9RLS9"/>
<dbReference type="STRING" id="220668.lp_0526"/>
<dbReference type="EnsemblBacteria" id="CCC78016">
    <property type="protein sequence ID" value="CCC78016"/>
    <property type="gene ID" value="lp_0526"/>
</dbReference>
<dbReference type="KEGG" id="lpl:lp_0526"/>
<dbReference type="PATRIC" id="fig|220668.9.peg.434"/>
<dbReference type="eggNOG" id="COG0458">
    <property type="taxonomic scope" value="Bacteria"/>
</dbReference>
<dbReference type="HOGENOM" id="CLU_000513_1_2_9"/>
<dbReference type="OrthoDB" id="9804197at2"/>
<dbReference type="PhylomeDB" id="Q9RLS9"/>
<dbReference type="UniPathway" id="UPA00068">
    <property type="reaction ID" value="UER00171"/>
</dbReference>
<dbReference type="Proteomes" id="UP000000432">
    <property type="component" value="Chromosome"/>
</dbReference>
<dbReference type="GO" id="GO:0005737">
    <property type="term" value="C:cytoplasm"/>
    <property type="evidence" value="ECO:0007669"/>
    <property type="project" value="TreeGrafter"/>
</dbReference>
<dbReference type="GO" id="GO:0005524">
    <property type="term" value="F:ATP binding"/>
    <property type="evidence" value="ECO:0007669"/>
    <property type="project" value="UniProtKB-UniRule"/>
</dbReference>
<dbReference type="GO" id="GO:0004087">
    <property type="term" value="F:carbamoyl-phosphate synthase (ammonia) activity"/>
    <property type="evidence" value="ECO:0007669"/>
    <property type="project" value="RHEA"/>
</dbReference>
<dbReference type="GO" id="GO:0004088">
    <property type="term" value="F:carbamoyl-phosphate synthase (glutamine-hydrolyzing) activity"/>
    <property type="evidence" value="ECO:0007669"/>
    <property type="project" value="UniProtKB-UniRule"/>
</dbReference>
<dbReference type="GO" id="GO:0046872">
    <property type="term" value="F:metal ion binding"/>
    <property type="evidence" value="ECO:0007669"/>
    <property type="project" value="UniProtKB-KW"/>
</dbReference>
<dbReference type="GO" id="GO:0044205">
    <property type="term" value="P:'de novo' UMP biosynthetic process"/>
    <property type="evidence" value="ECO:0007669"/>
    <property type="project" value="UniProtKB-UniRule"/>
</dbReference>
<dbReference type="GO" id="GO:0006541">
    <property type="term" value="P:glutamine metabolic process"/>
    <property type="evidence" value="ECO:0007669"/>
    <property type="project" value="TreeGrafter"/>
</dbReference>
<dbReference type="GO" id="GO:0006526">
    <property type="term" value="P:L-arginine biosynthetic process"/>
    <property type="evidence" value="ECO:0007669"/>
    <property type="project" value="UniProtKB-UniRule"/>
</dbReference>
<dbReference type="FunFam" id="3.30.470.20:FF:000001">
    <property type="entry name" value="Carbamoyl-phosphate synthase large chain"/>
    <property type="match status" value="1"/>
</dbReference>
<dbReference type="FunFam" id="3.30.470.20:FF:000026">
    <property type="entry name" value="Carbamoyl-phosphate synthase large chain"/>
    <property type="match status" value="1"/>
</dbReference>
<dbReference type="FunFam" id="3.40.50.20:FF:000001">
    <property type="entry name" value="Carbamoyl-phosphate synthase large chain"/>
    <property type="match status" value="1"/>
</dbReference>
<dbReference type="FunFam" id="3.40.50.20:FF:000002">
    <property type="entry name" value="Carbamoyl-phosphate synthase large chain"/>
    <property type="match status" value="1"/>
</dbReference>
<dbReference type="Gene3D" id="3.40.50.20">
    <property type="match status" value="2"/>
</dbReference>
<dbReference type="Gene3D" id="3.30.1490.20">
    <property type="entry name" value="ATP-grasp fold, A domain"/>
    <property type="match status" value="1"/>
</dbReference>
<dbReference type="Gene3D" id="3.30.470.20">
    <property type="entry name" value="ATP-grasp fold, B domain"/>
    <property type="match status" value="2"/>
</dbReference>
<dbReference type="Gene3D" id="1.10.1030.10">
    <property type="entry name" value="Carbamoyl-phosphate synthetase, large subunit oligomerisation domain"/>
    <property type="match status" value="1"/>
</dbReference>
<dbReference type="HAMAP" id="MF_01210_B">
    <property type="entry name" value="CPSase_L_chain_B"/>
    <property type="match status" value="1"/>
</dbReference>
<dbReference type="InterPro" id="IPR011761">
    <property type="entry name" value="ATP-grasp"/>
</dbReference>
<dbReference type="InterPro" id="IPR013815">
    <property type="entry name" value="ATP_grasp_subdomain_1"/>
</dbReference>
<dbReference type="InterPro" id="IPR006275">
    <property type="entry name" value="CarbamoylP_synth_lsu"/>
</dbReference>
<dbReference type="InterPro" id="IPR005480">
    <property type="entry name" value="CarbamoylP_synth_lsu_oligo"/>
</dbReference>
<dbReference type="InterPro" id="IPR036897">
    <property type="entry name" value="CarbamoylP_synth_lsu_oligo_sf"/>
</dbReference>
<dbReference type="InterPro" id="IPR005479">
    <property type="entry name" value="CbamoylP_synth_lsu-like_ATP-bd"/>
</dbReference>
<dbReference type="InterPro" id="IPR005483">
    <property type="entry name" value="CbamoylP_synth_lsu_CPSase_dom"/>
</dbReference>
<dbReference type="InterPro" id="IPR011607">
    <property type="entry name" value="MGS-like_dom"/>
</dbReference>
<dbReference type="InterPro" id="IPR016185">
    <property type="entry name" value="PreATP-grasp_dom_sf"/>
</dbReference>
<dbReference type="NCBIfam" id="TIGR01369">
    <property type="entry name" value="CPSaseII_lrg"/>
    <property type="match status" value="1"/>
</dbReference>
<dbReference type="NCBIfam" id="NF003671">
    <property type="entry name" value="PRK05294.1"/>
    <property type="match status" value="1"/>
</dbReference>
<dbReference type="NCBIfam" id="NF009455">
    <property type="entry name" value="PRK12815.1"/>
    <property type="match status" value="1"/>
</dbReference>
<dbReference type="PANTHER" id="PTHR11405:SF53">
    <property type="entry name" value="CARBAMOYL-PHOSPHATE SYNTHASE [AMMONIA], MITOCHONDRIAL"/>
    <property type="match status" value="1"/>
</dbReference>
<dbReference type="PANTHER" id="PTHR11405">
    <property type="entry name" value="CARBAMOYLTRANSFERASE FAMILY MEMBER"/>
    <property type="match status" value="1"/>
</dbReference>
<dbReference type="Pfam" id="PF02786">
    <property type="entry name" value="CPSase_L_D2"/>
    <property type="match status" value="2"/>
</dbReference>
<dbReference type="Pfam" id="PF02787">
    <property type="entry name" value="CPSase_L_D3"/>
    <property type="match status" value="1"/>
</dbReference>
<dbReference type="PRINTS" id="PR00098">
    <property type="entry name" value="CPSASE"/>
</dbReference>
<dbReference type="SMART" id="SM01096">
    <property type="entry name" value="CPSase_L_D3"/>
    <property type="match status" value="1"/>
</dbReference>
<dbReference type="SUPFAM" id="SSF48108">
    <property type="entry name" value="Carbamoyl phosphate synthetase, large subunit connection domain"/>
    <property type="match status" value="1"/>
</dbReference>
<dbReference type="SUPFAM" id="SSF56059">
    <property type="entry name" value="Glutathione synthetase ATP-binding domain-like"/>
    <property type="match status" value="2"/>
</dbReference>
<dbReference type="SUPFAM" id="SSF52440">
    <property type="entry name" value="PreATP-grasp domain"/>
    <property type="match status" value="2"/>
</dbReference>
<dbReference type="PROSITE" id="PS50975">
    <property type="entry name" value="ATP_GRASP"/>
    <property type="match status" value="2"/>
</dbReference>
<dbReference type="PROSITE" id="PS00866">
    <property type="entry name" value="CPSASE_1"/>
    <property type="match status" value="2"/>
</dbReference>
<dbReference type="PROSITE" id="PS00867">
    <property type="entry name" value="CPSASE_2"/>
    <property type="match status" value="1"/>
</dbReference>
<dbReference type="PROSITE" id="PS51855">
    <property type="entry name" value="MGS"/>
    <property type="match status" value="1"/>
</dbReference>
<feature type="chain" id="PRO_0000145015" description="Carbamoyl phosphate synthase arginine-specific large chain">
    <location>
        <begin position="1"/>
        <end position="1020"/>
    </location>
</feature>
<feature type="domain" description="ATP-grasp 1" evidence="1">
    <location>
        <begin position="133"/>
        <end position="327"/>
    </location>
</feature>
<feature type="domain" description="ATP-grasp 2" evidence="1">
    <location>
        <begin position="669"/>
        <end position="858"/>
    </location>
</feature>
<feature type="domain" description="MGS-like" evidence="1">
    <location>
        <begin position="927"/>
        <end position="1020"/>
    </location>
</feature>
<feature type="region of interest" description="Carboxyphosphate synthetic domain" evidence="1">
    <location>
        <begin position="1"/>
        <end position="401"/>
    </location>
</feature>
<feature type="region of interest" description="Oligomerization domain">
    <location>
        <begin position="402"/>
        <end position="544"/>
    </location>
</feature>
<feature type="region of interest" description="Oligomerization domain" evidence="1">
    <location>
        <begin position="402"/>
        <end position="542"/>
    </location>
</feature>
<feature type="region of interest" description="Carbamoyl phosphate synthetic domain" evidence="1">
    <location>
        <begin position="543"/>
        <end position="927"/>
    </location>
</feature>
<feature type="region of interest" description="Carbamoyl phosphate synthetic domain">
    <location>
        <begin position="544"/>
        <end position="927"/>
    </location>
</feature>
<feature type="region of interest" description="Allosteric domain" evidence="1">
    <location>
        <begin position="928"/>
        <end position="1020"/>
    </location>
</feature>
<feature type="binding site" evidence="1">
    <location>
        <position position="129"/>
    </location>
    <ligand>
        <name>ATP</name>
        <dbReference type="ChEBI" id="CHEBI:30616"/>
        <label>1</label>
    </ligand>
</feature>
<feature type="binding site" evidence="1">
    <location>
        <position position="169"/>
    </location>
    <ligand>
        <name>ATP</name>
        <dbReference type="ChEBI" id="CHEBI:30616"/>
        <label>1</label>
    </ligand>
</feature>
<feature type="binding site" evidence="1">
    <location>
        <position position="175"/>
    </location>
    <ligand>
        <name>ATP</name>
        <dbReference type="ChEBI" id="CHEBI:30616"/>
        <label>1</label>
    </ligand>
</feature>
<feature type="binding site" evidence="1">
    <location>
        <position position="176"/>
    </location>
    <ligand>
        <name>ATP</name>
        <dbReference type="ChEBI" id="CHEBI:30616"/>
        <label>1</label>
    </ligand>
</feature>
<feature type="binding site" evidence="1">
    <location>
        <position position="208"/>
    </location>
    <ligand>
        <name>ATP</name>
        <dbReference type="ChEBI" id="CHEBI:30616"/>
        <label>1</label>
    </ligand>
</feature>
<feature type="binding site" evidence="1">
    <location>
        <position position="210"/>
    </location>
    <ligand>
        <name>ATP</name>
        <dbReference type="ChEBI" id="CHEBI:30616"/>
        <label>1</label>
    </ligand>
</feature>
<feature type="binding site" evidence="1">
    <location>
        <position position="215"/>
    </location>
    <ligand>
        <name>ATP</name>
        <dbReference type="ChEBI" id="CHEBI:30616"/>
        <label>1</label>
    </ligand>
</feature>
<feature type="binding site" evidence="1">
    <location>
        <position position="241"/>
    </location>
    <ligand>
        <name>ATP</name>
        <dbReference type="ChEBI" id="CHEBI:30616"/>
        <label>1</label>
    </ligand>
</feature>
<feature type="binding site" evidence="1">
    <location>
        <position position="242"/>
    </location>
    <ligand>
        <name>ATP</name>
        <dbReference type="ChEBI" id="CHEBI:30616"/>
        <label>1</label>
    </ligand>
</feature>
<feature type="binding site" evidence="1">
    <location>
        <position position="243"/>
    </location>
    <ligand>
        <name>ATP</name>
        <dbReference type="ChEBI" id="CHEBI:30616"/>
        <label>1</label>
    </ligand>
</feature>
<feature type="binding site" evidence="1">
    <location>
        <position position="284"/>
    </location>
    <ligand>
        <name>ATP</name>
        <dbReference type="ChEBI" id="CHEBI:30616"/>
        <label>1</label>
    </ligand>
</feature>
<feature type="binding site" evidence="1">
    <location>
        <position position="284"/>
    </location>
    <ligand>
        <name>Mg(2+)</name>
        <dbReference type="ChEBI" id="CHEBI:18420"/>
        <label>1</label>
    </ligand>
</feature>
<feature type="binding site" evidence="1">
    <location>
        <position position="284"/>
    </location>
    <ligand>
        <name>Mn(2+)</name>
        <dbReference type="ChEBI" id="CHEBI:29035"/>
        <label>1</label>
    </ligand>
</feature>
<feature type="binding site" evidence="1">
    <location>
        <position position="298"/>
    </location>
    <ligand>
        <name>ATP</name>
        <dbReference type="ChEBI" id="CHEBI:30616"/>
        <label>1</label>
    </ligand>
</feature>
<feature type="binding site" evidence="1">
    <location>
        <position position="298"/>
    </location>
    <ligand>
        <name>Mg(2+)</name>
        <dbReference type="ChEBI" id="CHEBI:18420"/>
        <label>1</label>
    </ligand>
</feature>
<feature type="binding site" evidence="1">
    <location>
        <position position="298"/>
    </location>
    <ligand>
        <name>Mg(2+)</name>
        <dbReference type="ChEBI" id="CHEBI:18420"/>
        <label>2</label>
    </ligand>
</feature>
<feature type="binding site" evidence="1">
    <location>
        <position position="298"/>
    </location>
    <ligand>
        <name>Mn(2+)</name>
        <dbReference type="ChEBI" id="CHEBI:29035"/>
        <label>1</label>
    </ligand>
</feature>
<feature type="binding site" evidence="1">
    <location>
        <position position="298"/>
    </location>
    <ligand>
        <name>Mn(2+)</name>
        <dbReference type="ChEBI" id="CHEBI:29035"/>
        <label>2</label>
    </ligand>
</feature>
<feature type="binding site" evidence="1">
    <location>
        <position position="300"/>
    </location>
    <ligand>
        <name>Mg(2+)</name>
        <dbReference type="ChEBI" id="CHEBI:18420"/>
        <label>2</label>
    </ligand>
</feature>
<feature type="binding site" evidence="1">
    <location>
        <position position="300"/>
    </location>
    <ligand>
        <name>Mn(2+)</name>
        <dbReference type="ChEBI" id="CHEBI:29035"/>
        <label>2</label>
    </ligand>
</feature>
<feature type="binding site" evidence="1">
    <location>
        <position position="705"/>
    </location>
    <ligand>
        <name>ATP</name>
        <dbReference type="ChEBI" id="CHEBI:30616"/>
        <label>2</label>
    </ligand>
</feature>
<feature type="binding site" evidence="1">
    <location>
        <position position="744"/>
    </location>
    <ligand>
        <name>ATP</name>
        <dbReference type="ChEBI" id="CHEBI:30616"/>
        <label>2</label>
    </ligand>
</feature>
<feature type="binding site" evidence="1">
    <location>
        <position position="746"/>
    </location>
    <ligand>
        <name>ATP</name>
        <dbReference type="ChEBI" id="CHEBI:30616"/>
        <label>2</label>
    </ligand>
</feature>
<feature type="binding site" evidence="1">
    <location>
        <position position="750"/>
    </location>
    <ligand>
        <name>ATP</name>
        <dbReference type="ChEBI" id="CHEBI:30616"/>
        <label>2</label>
    </ligand>
</feature>
<feature type="binding site" evidence="1">
    <location>
        <position position="775"/>
    </location>
    <ligand>
        <name>ATP</name>
        <dbReference type="ChEBI" id="CHEBI:30616"/>
        <label>2</label>
    </ligand>
</feature>
<feature type="binding site" evidence="1">
    <location>
        <position position="776"/>
    </location>
    <ligand>
        <name>ATP</name>
        <dbReference type="ChEBI" id="CHEBI:30616"/>
        <label>2</label>
    </ligand>
</feature>
<feature type="binding site" evidence="1">
    <location>
        <position position="777"/>
    </location>
    <ligand>
        <name>ATP</name>
        <dbReference type="ChEBI" id="CHEBI:30616"/>
        <label>2</label>
    </ligand>
</feature>
<feature type="binding site" evidence="1">
    <location>
        <position position="778"/>
    </location>
    <ligand>
        <name>ATP</name>
        <dbReference type="ChEBI" id="CHEBI:30616"/>
        <label>2</label>
    </ligand>
</feature>
<feature type="binding site" evidence="1">
    <location>
        <position position="818"/>
    </location>
    <ligand>
        <name>ATP</name>
        <dbReference type="ChEBI" id="CHEBI:30616"/>
        <label>2</label>
    </ligand>
</feature>
<feature type="binding site" evidence="1">
    <location>
        <position position="818"/>
    </location>
    <ligand>
        <name>Mg(2+)</name>
        <dbReference type="ChEBI" id="CHEBI:18420"/>
        <label>3</label>
    </ligand>
</feature>
<feature type="binding site" evidence="1">
    <location>
        <position position="818"/>
    </location>
    <ligand>
        <name>Mn(2+)</name>
        <dbReference type="ChEBI" id="CHEBI:29035"/>
        <label>3</label>
    </ligand>
</feature>
<feature type="binding site" evidence="1">
    <location>
        <position position="831"/>
    </location>
    <ligand>
        <name>Mg(2+)</name>
        <dbReference type="ChEBI" id="CHEBI:18420"/>
        <label>4</label>
    </ligand>
</feature>
<feature type="binding site" evidence="1">
    <location>
        <position position="831"/>
    </location>
    <ligand>
        <name>Mn(2+)</name>
        <dbReference type="ChEBI" id="CHEBI:29035"/>
        <label>4</label>
    </ligand>
</feature>
<feature type="sequence conflict" description="In Ref. 1; CAB56843." evidence="2" ref="1">
    <original>A</original>
    <variation>T</variation>
    <location>
        <position position="81"/>
    </location>
</feature>
<feature type="sequence conflict" description="In Ref. 1; CAB56843." evidence="2" ref="1">
    <original>Y</original>
    <variation>C</variation>
    <location>
        <position position="281"/>
    </location>
</feature>
<reference key="1">
    <citation type="journal article" date="1997" name="J. Bacteriol.">
        <title>Arginine biosynthesis and regulation in Lactobacillus plantarum: the carA gene and the argCJBDF cluster are divergently transcribed.</title>
        <authorList>
            <person name="Bringel F."/>
            <person name="Frey L."/>
            <person name="Boivin S."/>
            <person name="Hubert J.-C."/>
        </authorList>
    </citation>
    <scope>NUCLEOTIDE SEQUENCE [GENOMIC DNA]</scope>
    <source>
        <strain>ATCC 8014 / CCM 1904 / DSM 20205 / NCDO 82 / NCIB 6376</strain>
    </source>
</reference>
<reference key="2">
    <citation type="journal article" date="2003" name="Proc. Natl. Acad. Sci. U.S.A.">
        <title>Complete genome sequence of Lactobacillus plantarum WCFS1.</title>
        <authorList>
            <person name="Kleerebezem M."/>
            <person name="Boekhorst J."/>
            <person name="van Kranenburg R."/>
            <person name="Molenaar D."/>
            <person name="Kuipers O.P."/>
            <person name="Leer R."/>
            <person name="Tarchini R."/>
            <person name="Peters S.A."/>
            <person name="Sandbrink H.M."/>
            <person name="Fiers M.W.E.J."/>
            <person name="Stiekema W."/>
            <person name="Klein Lankhorst R.M."/>
            <person name="Bron P.A."/>
            <person name="Hoffer S.M."/>
            <person name="Nierop Groot M.N."/>
            <person name="Kerkhoven R."/>
            <person name="De Vries M."/>
            <person name="Ursing B."/>
            <person name="De Vos W.M."/>
            <person name="Siezen R.J."/>
        </authorList>
    </citation>
    <scope>NUCLEOTIDE SEQUENCE [LARGE SCALE GENOMIC DNA]</scope>
    <source>
        <strain>ATCC BAA-793 / NCIMB 8826 / WCFS1</strain>
    </source>
</reference>
<reference key="3">
    <citation type="journal article" date="2012" name="J. Bacteriol.">
        <title>Complete resequencing and reannotation of the Lactobacillus plantarum WCFS1 genome.</title>
        <authorList>
            <person name="Siezen R.J."/>
            <person name="Francke C."/>
            <person name="Renckens B."/>
            <person name="Boekhorst J."/>
            <person name="Wels M."/>
            <person name="Kleerebezem M."/>
            <person name="van Hijum S.A."/>
        </authorList>
    </citation>
    <scope>NUCLEOTIDE SEQUENCE [LARGE SCALE GENOMIC DNA]</scope>
    <scope>GENOME REANNOTATION</scope>
    <source>
        <strain>ATCC BAA-793 / NCIMB 8826 / WCFS1</strain>
    </source>
</reference>
<reference key="4">
    <citation type="journal article" date="2000" name="J. Bacteriol.">
        <title>In Lactobacillus plantarum, carbamoyl phosphate is synthesized by two carbamoyl-phosphate synthetases (CPS): carbon dioxide differentiates the arginine-repressed from the pyrimidine-regulated CPS.</title>
        <authorList>
            <person name="Nicoloff H."/>
            <person name="Hubert J.-C."/>
            <person name="Bringel F."/>
        </authorList>
    </citation>
    <scope>FUNCTION</scope>
    <source>
        <strain>ATCC 8014 / CCM 1904 / DSM 20205 / NCDO 82 / NCIB 6376</strain>
    </source>
</reference>
<name>CARY_LACPL</name>
<comment type="function">
    <text evidence="2">Large subunit of the glutamine-dependent carbamoyl phosphate synthetase (CPSase). CPSase catalyzes the formation of carbamoyl phosphate from the ammonia moiety of glutamine, carbonate, and phosphate donated by ATP, constituting the first step of the biosynthetic pathway leading to arginine and/or urea. The large subunit (synthetase) binds the substrates ammonia (free or transferred from glutamine from the small subunit), hydrogencarbonate and ATP and carries out an ATP-coupled ligase reaction, activating hydrogencarbonate by forming carboxy phosphate which reacts with ammonia to form carbamoyl phosphate.</text>
</comment>
<comment type="catalytic activity">
    <reaction evidence="1">
        <text>hydrogencarbonate + L-glutamine + 2 ATP + H2O = carbamoyl phosphate + L-glutamate + 2 ADP + phosphate + 2 H(+)</text>
        <dbReference type="Rhea" id="RHEA:18633"/>
        <dbReference type="ChEBI" id="CHEBI:15377"/>
        <dbReference type="ChEBI" id="CHEBI:15378"/>
        <dbReference type="ChEBI" id="CHEBI:17544"/>
        <dbReference type="ChEBI" id="CHEBI:29985"/>
        <dbReference type="ChEBI" id="CHEBI:30616"/>
        <dbReference type="ChEBI" id="CHEBI:43474"/>
        <dbReference type="ChEBI" id="CHEBI:58228"/>
        <dbReference type="ChEBI" id="CHEBI:58359"/>
        <dbReference type="ChEBI" id="CHEBI:456216"/>
        <dbReference type="EC" id="6.3.5.5"/>
    </reaction>
</comment>
<comment type="catalytic activity">
    <molecule>Carbamoyl phosphate synthase arginine-specific large chain</molecule>
    <reaction evidence="1">
        <text>hydrogencarbonate + NH4(+) + 2 ATP = carbamoyl phosphate + 2 ADP + phosphate + 2 H(+)</text>
        <dbReference type="Rhea" id="RHEA:18029"/>
        <dbReference type="ChEBI" id="CHEBI:15378"/>
        <dbReference type="ChEBI" id="CHEBI:17544"/>
        <dbReference type="ChEBI" id="CHEBI:28938"/>
        <dbReference type="ChEBI" id="CHEBI:30616"/>
        <dbReference type="ChEBI" id="CHEBI:43474"/>
        <dbReference type="ChEBI" id="CHEBI:58228"/>
        <dbReference type="ChEBI" id="CHEBI:456216"/>
        <dbReference type="EC" id="6.3.4.16"/>
    </reaction>
</comment>
<comment type="cofactor">
    <cofactor evidence="1">
        <name>Mg(2+)</name>
        <dbReference type="ChEBI" id="CHEBI:18420"/>
    </cofactor>
    <cofactor evidence="1">
        <name>Mn(2+)</name>
        <dbReference type="ChEBI" id="CHEBI:29035"/>
    </cofactor>
    <text evidence="1">Binds 4 Mg(2+) or Mn(2+) ions per subunit.</text>
</comment>
<comment type="pathway">
    <text evidence="1">Amino-acid biosynthesis; L-arginine biosynthesis; carbamoyl phosphate from bicarbonate: step 1/1.</text>
</comment>
<comment type="subunit">
    <text evidence="1">Composed of two chains; the small (or glutamine) chain promotes the hydrolysis of glutamine to ammonia, which is used by the large (or ammonia) chain to synthesize carbamoyl phosphate. Tetramer of heterodimers (alpha,beta)4.</text>
</comment>
<comment type="domain">
    <text evidence="1">The large subunit is composed of 2 ATP-grasp domains that are involved in binding the 2 ATP molecules needed for carbamoyl phosphate synthesis. The N-terminal ATP-grasp domain (referred to as the carboxyphosphate synthetic component) catalyzes the ATP-dependent phosphorylation of hydrogencarbonate to carboxyphosphate and the subsequent nucleophilic attack by ammonia to form a carbamate intermediate. The C-terminal ATP-grasp domain (referred to as the carbamoyl phosphate synthetic component) then catalyzes the phosphorylation of carbamate with the second ATP to form the end product carbamoyl phosphate. The reactive and unstable enzyme intermediates are sequentially channeled from one active site to the next through the interior of the protein over a distance of at least 96 A.</text>
</comment>
<comment type="similarity">
    <text evidence="1">Belongs to the CarB family.</text>
</comment>
<gene>
    <name evidence="1" type="primary">carB1</name>
    <name type="ordered locus">lp_0526</name>
</gene>
<organism>
    <name type="scientific">Lactiplantibacillus plantarum (strain ATCC BAA-793 / NCIMB 8826 / WCFS1)</name>
    <name type="common">Lactobacillus plantarum</name>
    <dbReference type="NCBI Taxonomy" id="220668"/>
    <lineage>
        <taxon>Bacteria</taxon>
        <taxon>Bacillati</taxon>
        <taxon>Bacillota</taxon>
        <taxon>Bacilli</taxon>
        <taxon>Lactobacillales</taxon>
        <taxon>Lactobacillaceae</taxon>
        <taxon>Lactiplantibacillus</taxon>
    </lineage>
</organism>
<sequence length="1020" mass="108911">MPKNNAIHSIAVIGSGPIKIGQAAEFDYAGTQACLSLKAAGYHVILINSNPATIMTDTATADEVYLEPLTLTSVTKILRAAHPDALLPTLGGQTGLNLAMALDQAGVLNELKIQLLGTSLATINQAEDRAAFKTLMKRLHQPIPASTTVHHVTSALSFAEKIGYPVIVRPAFTLGGSGGGIANNAAELTQTLQRGLTMSPVTECLIEQSIAGFKEIEFEVMRDNQGTKIIVCSMENFDPVGIHTGDSIVYAPVQTLTDTEYQQLRTAALTIVEALDIRGGYNVQLAQDPNSRQYYVIEVNPRVSRSSALASKATGYPIAKIAADIAIGLNLSEIKNPVTQTTYAAFEPALDYVVAKIPRFAFDKFPTADAHLGTQMKATGEVMAIGSTLEEATLKAIASLEIDPKTQASLTPDHHVTTTEYIDQLTHPTDQRLFYLLAALQAGWPLAKLATLTQITPFFLSKLQHIAQLIRNIKQVPTSQHLLSAKKYGVSLATMAHYAQTSVATIAAMTADLPFVYKMVDTCAGEFASVTPYFYSTAFGQTNESHPLGHSILVLGSGPIRIGQGIEFDYTTVHCVKAIQQAGYHAIIVNNNPETVSTDFSTSDKLYFEPLTIERLMPIIALEQPAGVIVQFGGQTAINLAHQLTKLGVTVLGTSVSATDLTEDRQSFADCLRLLKIAQAAGTTVTELSGARQAAHAIGYPLLVRPSFVLGGRAMAIVHNDHELTPVIKSAVAAGHGAPILMDQYLAGTECEVDVLSDGTSCFIPGIMEHIEGAGVHSGDSITVYPPQHLSPAVQDKIVTIATKLAQHLHCVGMMNIQFVVTDDVYVIDVNPRASRTVPYMSKVTHLPLAQLATRLILGQSLATLGLVPGLLTPAPQQIAIKAPVFSFNKLPQSPVVLSPEMKSTGETLGIGPTFTTAWHAAMADSYHLETWQTVDGLITDIATVAQPAVQELFAANHLTVTTIANTTDWPAKTKAVGFTLNDQPDNPVAIAALNHGQPLITAIDTLKTLLAVTPTPATI</sequence>
<keyword id="KW-0028">Amino-acid biosynthesis</keyword>
<keyword id="KW-0055">Arginine biosynthesis</keyword>
<keyword id="KW-0067">ATP-binding</keyword>
<keyword id="KW-0436">Ligase</keyword>
<keyword id="KW-0460">Magnesium</keyword>
<keyword id="KW-0464">Manganese</keyword>
<keyword id="KW-0479">Metal-binding</keyword>
<keyword id="KW-0547">Nucleotide-binding</keyword>
<keyword id="KW-0665">Pyrimidine biosynthesis</keyword>
<keyword id="KW-1185">Reference proteome</keyword>
<keyword id="KW-0677">Repeat</keyword>